<comment type="function">
    <text evidence="1">May be involved in the generation of 28S rRNA.</text>
</comment>
<comment type="subcellular location">
    <subcellularLocation>
        <location evidence="3">Nucleus</location>
    </subcellularLocation>
</comment>
<comment type="similarity">
    <text evidence="3">Belongs to the RRP1 family.</text>
</comment>
<reference key="1">
    <citation type="journal article" date="1998" name="Science">
        <title>Genome sequence of the nematode C. elegans: a platform for investigating biology.</title>
        <authorList>
            <consortium name="The C. elegans sequencing consortium"/>
        </authorList>
    </citation>
    <scope>NUCLEOTIDE SEQUENCE [LARGE SCALE GENOMIC DNA]</scope>
    <source>
        <strain>Bristol N2</strain>
    </source>
</reference>
<gene>
    <name evidence="4" type="primary">rrp-1</name>
    <name evidence="4" type="ORF">C47E12.7</name>
</gene>
<proteinExistence type="inferred from homology"/>
<feature type="chain" id="PRO_0000065245" description="Ribosomal RNA processing protein 1 homolog">
    <location>
        <begin position="1"/>
        <end position="397"/>
    </location>
</feature>
<feature type="region of interest" description="Disordered" evidence="2">
    <location>
        <begin position="334"/>
        <end position="366"/>
    </location>
</feature>
<feature type="compositionally biased region" description="Basic and acidic residues" evidence="2">
    <location>
        <begin position="334"/>
        <end position="343"/>
    </location>
</feature>
<accession>Q18674</accession>
<protein>
    <recommendedName>
        <fullName>Ribosomal RNA processing protein 1 homolog</fullName>
    </recommendedName>
    <alternativeName>
        <fullName>RRP1-like protein</fullName>
    </alternativeName>
</protein>
<name>RRP1_CAEEL</name>
<evidence type="ECO:0000250" key="1">
    <source>
        <dbReference type="UniProtKB" id="P56182"/>
    </source>
</evidence>
<evidence type="ECO:0000256" key="2">
    <source>
        <dbReference type="SAM" id="MobiDB-lite"/>
    </source>
</evidence>
<evidence type="ECO:0000305" key="3"/>
<evidence type="ECO:0000312" key="4">
    <source>
        <dbReference type="WormBase" id="C47E12.7"/>
    </source>
</evidence>
<dbReference type="EMBL" id="BX284604">
    <property type="protein sequence ID" value="CAA93111.1"/>
    <property type="molecule type" value="Genomic_DNA"/>
</dbReference>
<dbReference type="PIR" id="T20013">
    <property type="entry name" value="T20013"/>
</dbReference>
<dbReference type="RefSeq" id="NP_501798.1">
    <property type="nucleotide sequence ID" value="NM_069397.9"/>
</dbReference>
<dbReference type="SMR" id="Q18674"/>
<dbReference type="BioGRID" id="42956">
    <property type="interactions" value="3"/>
</dbReference>
<dbReference type="FunCoup" id="Q18674">
    <property type="interactions" value="2232"/>
</dbReference>
<dbReference type="STRING" id="6239.C47E12.7.1"/>
<dbReference type="PaxDb" id="6239-C47E12.7"/>
<dbReference type="PeptideAtlas" id="Q18674"/>
<dbReference type="EnsemblMetazoa" id="C47E12.7.1">
    <property type="protein sequence ID" value="C47E12.7.1"/>
    <property type="gene ID" value="WBGene00008151"/>
</dbReference>
<dbReference type="GeneID" id="177853"/>
<dbReference type="KEGG" id="cel:CELE_C47E12.7"/>
<dbReference type="UCSC" id="C47E12.7">
    <property type="organism name" value="c. elegans"/>
</dbReference>
<dbReference type="AGR" id="WB:WBGene00008151"/>
<dbReference type="CTD" id="177853"/>
<dbReference type="WormBase" id="C47E12.7">
    <property type="protein sequence ID" value="CE20571"/>
    <property type="gene ID" value="WBGene00008151"/>
    <property type="gene designation" value="rrp-1"/>
</dbReference>
<dbReference type="eggNOG" id="KOG3911">
    <property type="taxonomic scope" value="Eukaryota"/>
</dbReference>
<dbReference type="GeneTree" id="ENSGT00390000011821"/>
<dbReference type="HOGENOM" id="CLU_058293_0_0_1"/>
<dbReference type="InParanoid" id="Q18674"/>
<dbReference type="OMA" id="REWVHID"/>
<dbReference type="OrthoDB" id="2019504at2759"/>
<dbReference type="PhylomeDB" id="Q18674"/>
<dbReference type="PRO" id="PR:Q18674"/>
<dbReference type="Proteomes" id="UP000001940">
    <property type="component" value="Chromosome IV"/>
</dbReference>
<dbReference type="Bgee" id="WBGene00008151">
    <property type="expression patterns" value="Expressed in larva and 4 other cell types or tissues"/>
</dbReference>
<dbReference type="GO" id="GO:0005634">
    <property type="term" value="C:nucleus"/>
    <property type="evidence" value="ECO:0007669"/>
    <property type="project" value="UniProtKB-SubCell"/>
</dbReference>
<dbReference type="GO" id="GO:0030688">
    <property type="term" value="C:preribosome, small subunit precursor"/>
    <property type="evidence" value="ECO:0007669"/>
    <property type="project" value="InterPro"/>
</dbReference>
<dbReference type="GO" id="GO:0006364">
    <property type="term" value="P:rRNA processing"/>
    <property type="evidence" value="ECO:0007669"/>
    <property type="project" value="UniProtKB-KW"/>
</dbReference>
<dbReference type="InterPro" id="IPR010301">
    <property type="entry name" value="RRP1"/>
</dbReference>
<dbReference type="PANTHER" id="PTHR13026">
    <property type="entry name" value="NNP-1 PROTEIN NOVEL NUCLEAR PROTEIN 1 NOP52"/>
    <property type="match status" value="1"/>
</dbReference>
<dbReference type="PANTHER" id="PTHR13026:SF0">
    <property type="entry name" value="RIBOSOMAL RNA PROCESSING 1B"/>
    <property type="match status" value="1"/>
</dbReference>
<dbReference type="Pfam" id="PF05997">
    <property type="entry name" value="Nop52"/>
    <property type="match status" value="1"/>
</dbReference>
<organism>
    <name type="scientific">Caenorhabditis elegans</name>
    <dbReference type="NCBI Taxonomy" id="6239"/>
    <lineage>
        <taxon>Eukaryota</taxon>
        <taxon>Metazoa</taxon>
        <taxon>Ecdysozoa</taxon>
        <taxon>Nematoda</taxon>
        <taxon>Chromadorea</taxon>
        <taxon>Rhabditida</taxon>
        <taxon>Rhabditina</taxon>
        <taxon>Rhabditomorpha</taxon>
        <taxon>Rhabditoidea</taxon>
        <taxon>Rhabditidae</taxon>
        <taxon>Peloderinae</taxon>
        <taxon>Caenorhabditis</taxon>
    </lineage>
</organism>
<sequence length="397" mass="45870">MDVDLASVEVVFAQKLACGEPATRQRALRVLHDWIRDQSAKKHFDDADLMRLCKGLHYVMWMQDKMILQEELADRIGGLINIFTSEEEKVRFVACFLKSLSKEWPHIDRWRMDKFLMEVRRMVRACFTHLAELKWKKDIRDEYWKVFQETTISTDKSFNEALKFHFASILLDELDAAGGLTKKQVTACLKPYIELLGNKDISEYLFTSLYEEIFKTILQQKSDLITAVEEGEEMDQGGIEFSYKEIGALLFEVGKQEHLNAKRRKKIYDLVKKFDKSSRGQDPLHFETPVPKERLTRHDYEEAEKKAIVLANSFKQERKSSRKVKSQIKKRAREAAEAARQENGDDVPDDEIAEVKKGNGKKTAVPKVKKGRPLLKAKGVGKKRMVGGLKRKAGKKN</sequence>
<keyword id="KW-0539">Nucleus</keyword>
<keyword id="KW-1185">Reference proteome</keyword>
<keyword id="KW-0698">rRNA processing</keyword>